<sequence>MEAIAKHQFARVSAQKGRLVADQIRGLPVEKALDILAYSPKAAAGLIKKVLESAIANAEHNEGADIDELKVSRVFLDEGPTMKRIKPRAKGRADRIFKRTSHITVVVSDS</sequence>
<evidence type="ECO:0000255" key="1">
    <source>
        <dbReference type="HAMAP-Rule" id="MF_01331"/>
    </source>
</evidence>
<evidence type="ECO:0000305" key="2"/>
<protein>
    <recommendedName>
        <fullName evidence="1">Large ribosomal subunit protein uL22</fullName>
    </recommendedName>
    <alternativeName>
        <fullName evidence="2">50S ribosomal protein L22</fullName>
    </alternativeName>
</protein>
<gene>
    <name evidence="1" type="primary">rplV</name>
    <name type="ordered locus">IL1919</name>
</gene>
<comment type="function">
    <text evidence="1">This protein binds specifically to 23S rRNA; its binding is stimulated by other ribosomal proteins, e.g. L4, L17, and L20. It is important during the early stages of 50S assembly. It makes multiple contacts with different domains of the 23S rRNA in the assembled 50S subunit and ribosome (By similarity).</text>
</comment>
<comment type="function">
    <text evidence="1">The globular domain of the protein is located near the polypeptide exit tunnel on the outside of the subunit, while an extended beta-hairpin is found that lines the wall of the exit tunnel in the center of the 70S ribosome.</text>
</comment>
<comment type="subunit">
    <text evidence="1">Part of the 50S ribosomal subunit.</text>
</comment>
<comment type="similarity">
    <text evidence="1">Belongs to the universal ribosomal protein uL22 family.</text>
</comment>
<dbReference type="EMBL" id="AE017340">
    <property type="protein sequence ID" value="AAV82751.1"/>
    <property type="molecule type" value="Genomic_DNA"/>
</dbReference>
<dbReference type="RefSeq" id="WP_011235148.1">
    <property type="nucleotide sequence ID" value="NC_006512.1"/>
</dbReference>
<dbReference type="SMR" id="Q5QXY2"/>
<dbReference type="STRING" id="283942.IL1919"/>
<dbReference type="GeneID" id="41337107"/>
<dbReference type="KEGG" id="ilo:IL1919"/>
<dbReference type="eggNOG" id="COG0091">
    <property type="taxonomic scope" value="Bacteria"/>
</dbReference>
<dbReference type="HOGENOM" id="CLU_083987_3_3_6"/>
<dbReference type="OrthoDB" id="9805969at2"/>
<dbReference type="Proteomes" id="UP000001171">
    <property type="component" value="Chromosome"/>
</dbReference>
<dbReference type="GO" id="GO:0022625">
    <property type="term" value="C:cytosolic large ribosomal subunit"/>
    <property type="evidence" value="ECO:0007669"/>
    <property type="project" value="TreeGrafter"/>
</dbReference>
<dbReference type="GO" id="GO:0019843">
    <property type="term" value="F:rRNA binding"/>
    <property type="evidence" value="ECO:0007669"/>
    <property type="project" value="UniProtKB-UniRule"/>
</dbReference>
<dbReference type="GO" id="GO:0003735">
    <property type="term" value="F:structural constituent of ribosome"/>
    <property type="evidence" value="ECO:0007669"/>
    <property type="project" value="InterPro"/>
</dbReference>
<dbReference type="GO" id="GO:0006412">
    <property type="term" value="P:translation"/>
    <property type="evidence" value="ECO:0007669"/>
    <property type="project" value="UniProtKB-UniRule"/>
</dbReference>
<dbReference type="CDD" id="cd00336">
    <property type="entry name" value="Ribosomal_L22"/>
    <property type="match status" value="1"/>
</dbReference>
<dbReference type="FunFam" id="3.90.470.10:FF:000001">
    <property type="entry name" value="50S ribosomal protein L22"/>
    <property type="match status" value="1"/>
</dbReference>
<dbReference type="Gene3D" id="3.90.470.10">
    <property type="entry name" value="Ribosomal protein L22/L17"/>
    <property type="match status" value="1"/>
</dbReference>
<dbReference type="HAMAP" id="MF_01331_B">
    <property type="entry name" value="Ribosomal_uL22_B"/>
    <property type="match status" value="1"/>
</dbReference>
<dbReference type="InterPro" id="IPR001063">
    <property type="entry name" value="Ribosomal_uL22"/>
</dbReference>
<dbReference type="InterPro" id="IPR005727">
    <property type="entry name" value="Ribosomal_uL22_bac/chlpt-type"/>
</dbReference>
<dbReference type="InterPro" id="IPR047867">
    <property type="entry name" value="Ribosomal_uL22_bac/org-type"/>
</dbReference>
<dbReference type="InterPro" id="IPR018260">
    <property type="entry name" value="Ribosomal_uL22_CS"/>
</dbReference>
<dbReference type="InterPro" id="IPR036394">
    <property type="entry name" value="Ribosomal_uL22_sf"/>
</dbReference>
<dbReference type="NCBIfam" id="TIGR01044">
    <property type="entry name" value="rplV_bact"/>
    <property type="match status" value="1"/>
</dbReference>
<dbReference type="PANTHER" id="PTHR13501">
    <property type="entry name" value="CHLOROPLAST 50S RIBOSOMAL PROTEIN L22-RELATED"/>
    <property type="match status" value="1"/>
</dbReference>
<dbReference type="PANTHER" id="PTHR13501:SF8">
    <property type="entry name" value="LARGE RIBOSOMAL SUBUNIT PROTEIN UL22M"/>
    <property type="match status" value="1"/>
</dbReference>
<dbReference type="Pfam" id="PF00237">
    <property type="entry name" value="Ribosomal_L22"/>
    <property type="match status" value="1"/>
</dbReference>
<dbReference type="SUPFAM" id="SSF54843">
    <property type="entry name" value="Ribosomal protein L22"/>
    <property type="match status" value="1"/>
</dbReference>
<dbReference type="PROSITE" id="PS00464">
    <property type="entry name" value="RIBOSOMAL_L22"/>
    <property type="match status" value="1"/>
</dbReference>
<feature type="chain" id="PRO_0000243157" description="Large ribosomal subunit protein uL22">
    <location>
        <begin position="1"/>
        <end position="110"/>
    </location>
</feature>
<accession>Q5QXY2</accession>
<reference key="1">
    <citation type="journal article" date="2004" name="Proc. Natl. Acad. Sci. U.S.A.">
        <title>Genome sequence of the deep-sea gamma-proteobacterium Idiomarina loihiensis reveals amino acid fermentation as a source of carbon and energy.</title>
        <authorList>
            <person name="Hou S."/>
            <person name="Saw J.H."/>
            <person name="Lee K.S."/>
            <person name="Freitas T.A."/>
            <person name="Belisle C."/>
            <person name="Kawarabayasi Y."/>
            <person name="Donachie S.P."/>
            <person name="Pikina A."/>
            <person name="Galperin M.Y."/>
            <person name="Koonin E.V."/>
            <person name="Makarova K.S."/>
            <person name="Omelchenko M.V."/>
            <person name="Sorokin A."/>
            <person name="Wolf Y.I."/>
            <person name="Li Q.X."/>
            <person name="Keum Y.S."/>
            <person name="Campbell S."/>
            <person name="Denery J."/>
            <person name="Aizawa S."/>
            <person name="Shibata S."/>
            <person name="Malahoff A."/>
            <person name="Alam M."/>
        </authorList>
    </citation>
    <scope>NUCLEOTIDE SEQUENCE [LARGE SCALE GENOMIC DNA]</scope>
    <source>
        <strain>ATCC BAA-735 / DSM 15497 / L2-TR</strain>
    </source>
</reference>
<keyword id="KW-1185">Reference proteome</keyword>
<keyword id="KW-0687">Ribonucleoprotein</keyword>
<keyword id="KW-0689">Ribosomal protein</keyword>
<keyword id="KW-0694">RNA-binding</keyword>
<keyword id="KW-0699">rRNA-binding</keyword>
<name>RL22_IDILO</name>
<proteinExistence type="inferred from homology"/>
<organism>
    <name type="scientific">Idiomarina loihiensis (strain ATCC BAA-735 / DSM 15497 / L2-TR)</name>
    <dbReference type="NCBI Taxonomy" id="283942"/>
    <lineage>
        <taxon>Bacteria</taxon>
        <taxon>Pseudomonadati</taxon>
        <taxon>Pseudomonadota</taxon>
        <taxon>Gammaproteobacteria</taxon>
        <taxon>Alteromonadales</taxon>
        <taxon>Idiomarinaceae</taxon>
        <taxon>Idiomarina</taxon>
    </lineage>
</organism>